<comment type="function">
    <text evidence="1">Specifically methylates guanosine-37 in various tRNAs.</text>
</comment>
<comment type="catalytic activity">
    <reaction>
        <text>guanosine(37) in tRNA + S-adenosyl-L-methionine = N(1)-methylguanosine(37) in tRNA + S-adenosyl-L-homocysteine + H(+)</text>
        <dbReference type="Rhea" id="RHEA:36899"/>
        <dbReference type="Rhea" id="RHEA-COMP:10145"/>
        <dbReference type="Rhea" id="RHEA-COMP:10147"/>
        <dbReference type="ChEBI" id="CHEBI:15378"/>
        <dbReference type="ChEBI" id="CHEBI:57856"/>
        <dbReference type="ChEBI" id="CHEBI:59789"/>
        <dbReference type="ChEBI" id="CHEBI:73542"/>
        <dbReference type="ChEBI" id="CHEBI:74269"/>
        <dbReference type="EC" id="2.1.1.228"/>
    </reaction>
</comment>
<comment type="subunit">
    <text evidence="1">Homodimer.</text>
</comment>
<comment type="subcellular location">
    <subcellularLocation>
        <location evidence="2">Cytoplasm</location>
    </subcellularLocation>
</comment>
<comment type="similarity">
    <text evidence="2">Belongs to the RNA methyltransferase TrmD family.</text>
</comment>
<dbReference type="EC" id="2.1.1.228"/>
<dbReference type="EMBL" id="AE005672">
    <property type="protein sequence ID" value="AAK74917.1"/>
    <property type="molecule type" value="Genomic_DNA"/>
</dbReference>
<dbReference type="PIR" id="D95090">
    <property type="entry name" value="D95090"/>
</dbReference>
<dbReference type="RefSeq" id="WP_000686921.1">
    <property type="nucleotide sequence ID" value="NZ_CP155539.1"/>
</dbReference>
<dbReference type="SMR" id="Q97RM4"/>
<dbReference type="PaxDb" id="170187-SP_0779"/>
<dbReference type="EnsemblBacteria" id="AAK74917">
    <property type="protein sequence ID" value="AAK74917"/>
    <property type="gene ID" value="SP_0779"/>
</dbReference>
<dbReference type="KEGG" id="spn:SP_0779"/>
<dbReference type="eggNOG" id="COG0336">
    <property type="taxonomic scope" value="Bacteria"/>
</dbReference>
<dbReference type="PhylomeDB" id="Q97RM4"/>
<dbReference type="BioCyc" id="SPNE170187:G1FZB-795-MONOMER"/>
<dbReference type="Proteomes" id="UP000000585">
    <property type="component" value="Chromosome"/>
</dbReference>
<dbReference type="GO" id="GO:0005829">
    <property type="term" value="C:cytosol"/>
    <property type="evidence" value="ECO:0007669"/>
    <property type="project" value="TreeGrafter"/>
</dbReference>
<dbReference type="GO" id="GO:0052906">
    <property type="term" value="F:tRNA (guanine(37)-N1)-methyltransferase activity"/>
    <property type="evidence" value="ECO:0007669"/>
    <property type="project" value="UniProtKB-UniRule"/>
</dbReference>
<dbReference type="GO" id="GO:0002939">
    <property type="term" value="P:tRNA N1-guanine methylation"/>
    <property type="evidence" value="ECO:0007669"/>
    <property type="project" value="TreeGrafter"/>
</dbReference>
<dbReference type="CDD" id="cd18080">
    <property type="entry name" value="TrmD-like"/>
    <property type="match status" value="1"/>
</dbReference>
<dbReference type="FunFam" id="1.10.1270.20:FF:000001">
    <property type="entry name" value="tRNA (guanine-N(1)-)-methyltransferase"/>
    <property type="match status" value="1"/>
</dbReference>
<dbReference type="FunFam" id="3.40.1280.10:FF:000001">
    <property type="entry name" value="tRNA (guanine-N(1)-)-methyltransferase"/>
    <property type="match status" value="1"/>
</dbReference>
<dbReference type="Gene3D" id="3.40.1280.10">
    <property type="match status" value="1"/>
</dbReference>
<dbReference type="Gene3D" id="1.10.1270.20">
    <property type="entry name" value="tRNA(m1g37)methyltransferase, domain 2"/>
    <property type="match status" value="1"/>
</dbReference>
<dbReference type="HAMAP" id="MF_00605">
    <property type="entry name" value="TrmD"/>
    <property type="match status" value="1"/>
</dbReference>
<dbReference type="InterPro" id="IPR029028">
    <property type="entry name" value="Alpha/beta_knot_MTases"/>
</dbReference>
<dbReference type="InterPro" id="IPR023148">
    <property type="entry name" value="tRNA_m1G_MeTrfase_C_sf"/>
</dbReference>
<dbReference type="InterPro" id="IPR002649">
    <property type="entry name" value="tRNA_m1G_MeTrfase_TrmD"/>
</dbReference>
<dbReference type="InterPro" id="IPR029026">
    <property type="entry name" value="tRNA_m1G_MTases_N"/>
</dbReference>
<dbReference type="InterPro" id="IPR016009">
    <property type="entry name" value="tRNA_MeTrfase_TRMD/TRM10"/>
</dbReference>
<dbReference type="NCBIfam" id="NF000648">
    <property type="entry name" value="PRK00026.1"/>
    <property type="match status" value="1"/>
</dbReference>
<dbReference type="NCBIfam" id="TIGR00088">
    <property type="entry name" value="trmD"/>
    <property type="match status" value="1"/>
</dbReference>
<dbReference type="PANTHER" id="PTHR46417">
    <property type="entry name" value="TRNA (GUANINE-N(1)-)-METHYLTRANSFERASE"/>
    <property type="match status" value="1"/>
</dbReference>
<dbReference type="PANTHER" id="PTHR46417:SF1">
    <property type="entry name" value="TRNA (GUANINE-N(1)-)-METHYLTRANSFERASE"/>
    <property type="match status" value="1"/>
</dbReference>
<dbReference type="Pfam" id="PF01746">
    <property type="entry name" value="tRNA_m1G_MT"/>
    <property type="match status" value="1"/>
</dbReference>
<dbReference type="PIRSF" id="PIRSF000386">
    <property type="entry name" value="tRNA_mtase"/>
    <property type="match status" value="1"/>
</dbReference>
<dbReference type="SUPFAM" id="SSF75217">
    <property type="entry name" value="alpha/beta knot"/>
    <property type="match status" value="1"/>
</dbReference>
<keyword id="KW-0963">Cytoplasm</keyword>
<keyword id="KW-0489">Methyltransferase</keyword>
<keyword id="KW-1185">Reference proteome</keyword>
<keyword id="KW-0949">S-adenosyl-L-methionine</keyword>
<keyword id="KW-0808">Transferase</keyword>
<keyword id="KW-0819">tRNA processing</keyword>
<evidence type="ECO:0000250" key="1"/>
<evidence type="ECO:0000305" key="2"/>
<name>TRMD_STRPN</name>
<sequence length="239" mass="27633">MKIDILTLFPEMFSPLEHSIVGKAREKGLLDIQYHNFRENAEKARHVDDEPYGGGQGMLLRAQPIFDSFDAIEKKNPRVILLDPAGKQFDQAYAEDLAQEEELIFICGHYEGYDERIKTLVTDEISLGDYVLTGGELAAMTMIDATVRLIPEVIGKESSHQDDSFSSGLLEYPQYTRPYDYRGMVVPDVLMSGHHEKIRQWRLYESLKKTYERRPDLLEHYQLTVEEEKMLAEIKENKE</sequence>
<accession>Q97RM4</accession>
<gene>
    <name type="primary">trmD</name>
    <name type="ordered locus">SP_0779</name>
</gene>
<reference key="1">
    <citation type="journal article" date="2001" name="Science">
        <title>Complete genome sequence of a virulent isolate of Streptococcus pneumoniae.</title>
        <authorList>
            <person name="Tettelin H."/>
            <person name="Nelson K.E."/>
            <person name="Paulsen I.T."/>
            <person name="Eisen J.A."/>
            <person name="Read T.D."/>
            <person name="Peterson S.N."/>
            <person name="Heidelberg J.F."/>
            <person name="DeBoy R.T."/>
            <person name="Haft D.H."/>
            <person name="Dodson R.J."/>
            <person name="Durkin A.S."/>
            <person name="Gwinn M.L."/>
            <person name="Kolonay J.F."/>
            <person name="Nelson W.C."/>
            <person name="Peterson J.D."/>
            <person name="Umayam L.A."/>
            <person name="White O."/>
            <person name="Salzberg S.L."/>
            <person name="Lewis M.R."/>
            <person name="Radune D."/>
            <person name="Holtzapple E.K."/>
            <person name="Khouri H.M."/>
            <person name="Wolf A.M."/>
            <person name="Utterback T.R."/>
            <person name="Hansen C.L."/>
            <person name="McDonald L.A."/>
            <person name="Feldblyum T.V."/>
            <person name="Angiuoli S.V."/>
            <person name="Dickinson T."/>
            <person name="Hickey E.K."/>
            <person name="Holt I.E."/>
            <person name="Loftus B.J."/>
            <person name="Yang F."/>
            <person name="Smith H.O."/>
            <person name="Venter J.C."/>
            <person name="Dougherty B.A."/>
            <person name="Morrison D.A."/>
            <person name="Hollingshead S.K."/>
            <person name="Fraser C.M."/>
        </authorList>
    </citation>
    <scope>NUCLEOTIDE SEQUENCE [LARGE SCALE GENOMIC DNA]</scope>
    <source>
        <strain>ATCC BAA-334 / TIGR4</strain>
    </source>
</reference>
<protein>
    <recommendedName>
        <fullName>tRNA (guanine-N(1)-)-methyltransferase</fullName>
        <ecNumber>2.1.1.228</ecNumber>
    </recommendedName>
    <alternativeName>
        <fullName>M1G-methyltransferase</fullName>
    </alternativeName>
    <alternativeName>
        <fullName>tRNA [GM37] methyltransferase</fullName>
    </alternativeName>
</protein>
<proteinExistence type="inferred from homology"/>
<feature type="chain" id="PRO_0000060468" description="tRNA (guanine-N(1)-)-methyltransferase">
    <location>
        <begin position="1"/>
        <end position="239"/>
    </location>
</feature>
<feature type="binding site" evidence="1">
    <location>
        <position position="108"/>
    </location>
    <ligand>
        <name>S-adenosyl-L-methionine</name>
        <dbReference type="ChEBI" id="CHEBI:59789"/>
    </ligand>
</feature>
<feature type="binding site" evidence="1">
    <location>
        <begin position="127"/>
        <end position="132"/>
    </location>
    <ligand>
        <name>S-adenosyl-L-methionine</name>
        <dbReference type="ChEBI" id="CHEBI:59789"/>
    </ligand>
</feature>
<organism>
    <name type="scientific">Streptococcus pneumoniae serotype 4 (strain ATCC BAA-334 / TIGR4)</name>
    <dbReference type="NCBI Taxonomy" id="170187"/>
    <lineage>
        <taxon>Bacteria</taxon>
        <taxon>Bacillati</taxon>
        <taxon>Bacillota</taxon>
        <taxon>Bacilli</taxon>
        <taxon>Lactobacillales</taxon>
        <taxon>Streptococcaceae</taxon>
        <taxon>Streptococcus</taxon>
    </lineage>
</organism>